<protein>
    <recommendedName>
        <fullName>Uncharacterized HTH-type transcriptional regulator YdzF</fullName>
    </recommendedName>
</protein>
<gene>
    <name type="primary">ydzF</name>
    <name type="ordered locus">BSU05270</name>
</gene>
<name>YDZF_BACSU</name>
<reference key="1">
    <citation type="journal article" date="1997" name="Nature">
        <title>The complete genome sequence of the Gram-positive bacterium Bacillus subtilis.</title>
        <authorList>
            <person name="Kunst F."/>
            <person name="Ogasawara N."/>
            <person name="Moszer I."/>
            <person name="Albertini A.M."/>
            <person name="Alloni G."/>
            <person name="Azevedo V."/>
            <person name="Bertero M.G."/>
            <person name="Bessieres P."/>
            <person name="Bolotin A."/>
            <person name="Borchert S."/>
            <person name="Borriss R."/>
            <person name="Boursier L."/>
            <person name="Brans A."/>
            <person name="Braun M."/>
            <person name="Brignell S.C."/>
            <person name="Bron S."/>
            <person name="Brouillet S."/>
            <person name="Bruschi C.V."/>
            <person name="Caldwell B."/>
            <person name="Capuano V."/>
            <person name="Carter N.M."/>
            <person name="Choi S.-K."/>
            <person name="Codani J.-J."/>
            <person name="Connerton I.F."/>
            <person name="Cummings N.J."/>
            <person name="Daniel R.A."/>
            <person name="Denizot F."/>
            <person name="Devine K.M."/>
            <person name="Duesterhoeft A."/>
            <person name="Ehrlich S.D."/>
            <person name="Emmerson P.T."/>
            <person name="Entian K.-D."/>
            <person name="Errington J."/>
            <person name="Fabret C."/>
            <person name="Ferrari E."/>
            <person name="Foulger D."/>
            <person name="Fritz C."/>
            <person name="Fujita M."/>
            <person name="Fujita Y."/>
            <person name="Fuma S."/>
            <person name="Galizzi A."/>
            <person name="Galleron N."/>
            <person name="Ghim S.-Y."/>
            <person name="Glaser P."/>
            <person name="Goffeau A."/>
            <person name="Golightly E.J."/>
            <person name="Grandi G."/>
            <person name="Guiseppi G."/>
            <person name="Guy B.J."/>
            <person name="Haga K."/>
            <person name="Haiech J."/>
            <person name="Harwood C.R."/>
            <person name="Henaut A."/>
            <person name="Hilbert H."/>
            <person name="Holsappel S."/>
            <person name="Hosono S."/>
            <person name="Hullo M.-F."/>
            <person name="Itaya M."/>
            <person name="Jones L.-M."/>
            <person name="Joris B."/>
            <person name="Karamata D."/>
            <person name="Kasahara Y."/>
            <person name="Klaerr-Blanchard M."/>
            <person name="Klein C."/>
            <person name="Kobayashi Y."/>
            <person name="Koetter P."/>
            <person name="Koningstein G."/>
            <person name="Krogh S."/>
            <person name="Kumano M."/>
            <person name="Kurita K."/>
            <person name="Lapidus A."/>
            <person name="Lardinois S."/>
            <person name="Lauber J."/>
            <person name="Lazarevic V."/>
            <person name="Lee S.-M."/>
            <person name="Levine A."/>
            <person name="Liu H."/>
            <person name="Masuda S."/>
            <person name="Mauel C."/>
            <person name="Medigue C."/>
            <person name="Medina N."/>
            <person name="Mellado R.P."/>
            <person name="Mizuno M."/>
            <person name="Moestl D."/>
            <person name="Nakai S."/>
            <person name="Noback M."/>
            <person name="Noone D."/>
            <person name="O'Reilly M."/>
            <person name="Ogawa K."/>
            <person name="Ogiwara A."/>
            <person name="Oudega B."/>
            <person name="Park S.-H."/>
            <person name="Parro V."/>
            <person name="Pohl T.M."/>
            <person name="Portetelle D."/>
            <person name="Porwollik S."/>
            <person name="Prescott A.M."/>
            <person name="Presecan E."/>
            <person name="Pujic P."/>
            <person name="Purnelle B."/>
            <person name="Rapoport G."/>
            <person name="Rey M."/>
            <person name="Reynolds S."/>
            <person name="Rieger M."/>
            <person name="Rivolta C."/>
            <person name="Rocha E."/>
            <person name="Roche B."/>
            <person name="Rose M."/>
            <person name="Sadaie Y."/>
            <person name="Sato T."/>
            <person name="Scanlan E."/>
            <person name="Schleich S."/>
            <person name="Schroeter R."/>
            <person name="Scoffone F."/>
            <person name="Sekiguchi J."/>
            <person name="Sekowska A."/>
            <person name="Seror S.J."/>
            <person name="Serror P."/>
            <person name="Shin B.-S."/>
            <person name="Soldo B."/>
            <person name="Sorokin A."/>
            <person name="Tacconi E."/>
            <person name="Takagi T."/>
            <person name="Takahashi H."/>
            <person name="Takemaru K."/>
            <person name="Takeuchi M."/>
            <person name="Tamakoshi A."/>
            <person name="Tanaka T."/>
            <person name="Terpstra P."/>
            <person name="Tognoni A."/>
            <person name="Tosato V."/>
            <person name="Uchiyama S."/>
            <person name="Vandenbol M."/>
            <person name="Vannier F."/>
            <person name="Vassarotti A."/>
            <person name="Viari A."/>
            <person name="Wambutt R."/>
            <person name="Wedler E."/>
            <person name="Wedler H."/>
            <person name="Weitzenegger T."/>
            <person name="Winters P."/>
            <person name="Wipat A."/>
            <person name="Yamamoto H."/>
            <person name="Yamane K."/>
            <person name="Yasumoto K."/>
            <person name="Yata K."/>
            <person name="Yoshida K."/>
            <person name="Yoshikawa H.-F."/>
            <person name="Zumstein E."/>
            <person name="Yoshikawa H."/>
            <person name="Danchin A."/>
        </authorList>
    </citation>
    <scope>NUCLEOTIDE SEQUENCE [LARGE SCALE GENOMIC DNA]</scope>
    <source>
        <strain>168</strain>
    </source>
</reference>
<accession>O31494</accession>
<dbReference type="EMBL" id="AL009126">
    <property type="protein sequence ID" value="CAB12334.1"/>
    <property type="molecule type" value="Genomic_DNA"/>
</dbReference>
<dbReference type="PIR" id="G69790">
    <property type="entry name" value="G69790"/>
</dbReference>
<dbReference type="RefSeq" id="NP_388408.1">
    <property type="nucleotide sequence ID" value="NC_000964.3"/>
</dbReference>
<dbReference type="RefSeq" id="WP_003243941.1">
    <property type="nucleotide sequence ID" value="NZ_OZ025638.1"/>
</dbReference>
<dbReference type="SMR" id="O31494"/>
<dbReference type="FunCoup" id="O31494">
    <property type="interactions" value="53"/>
</dbReference>
<dbReference type="STRING" id="224308.BSU05270"/>
<dbReference type="PaxDb" id="224308-BSU05270"/>
<dbReference type="EnsemblBacteria" id="CAB12334">
    <property type="protein sequence ID" value="CAB12334"/>
    <property type="gene ID" value="BSU_05270"/>
</dbReference>
<dbReference type="GeneID" id="938088"/>
<dbReference type="KEGG" id="bsu:BSU05270"/>
<dbReference type="PATRIC" id="fig|224308.179.peg.562"/>
<dbReference type="eggNOG" id="COG1733">
    <property type="taxonomic scope" value="Bacteria"/>
</dbReference>
<dbReference type="InParanoid" id="O31494"/>
<dbReference type="OrthoDB" id="9791143at2"/>
<dbReference type="PhylomeDB" id="O31494"/>
<dbReference type="BioCyc" id="BSUB:BSU05270-MONOMER"/>
<dbReference type="Proteomes" id="UP000001570">
    <property type="component" value="Chromosome"/>
</dbReference>
<dbReference type="GO" id="GO:0003677">
    <property type="term" value="F:DNA binding"/>
    <property type="evidence" value="ECO:0007669"/>
    <property type="project" value="UniProtKB-KW"/>
</dbReference>
<dbReference type="Gene3D" id="1.10.10.10">
    <property type="entry name" value="Winged helix-like DNA-binding domain superfamily/Winged helix DNA-binding domain"/>
    <property type="match status" value="1"/>
</dbReference>
<dbReference type="InterPro" id="IPR002577">
    <property type="entry name" value="HTH_HxlR"/>
</dbReference>
<dbReference type="InterPro" id="IPR036388">
    <property type="entry name" value="WH-like_DNA-bd_sf"/>
</dbReference>
<dbReference type="InterPro" id="IPR036390">
    <property type="entry name" value="WH_DNA-bd_sf"/>
</dbReference>
<dbReference type="PANTHER" id="PTHR33204:SF29">
    <property type="entry name" value="TRANSCRIPTIONAL REGULATOR"/>
    <property type="match status" value="1"/>
</dbReference>
<dbReference type="PANTHER" id="PTHR33204">
    <property type="entry name" value="TRANSCRIPTIONAL REGULATOR, MARR FAMILY"/>
    <property type="match status" value="1"/>
</dbReference>
<dbReference type="Pfam" id="PF01638">
    <property type="entry name" value="HxlR"/>
    <property type="match status" value="1"/>
</dbReference>
<dbReference type="SUPFAM" id="SSF46785">
    <property type="entry name" value="Winged helix' DNA-binding domain"/>
    <property type="match status" value="1"/>
</dbReference>
<dbReference type="PROSITE" id="PS51118">
    <property type="entry name" value="HTH_HXLR"/>
    <property type="match status" value="1"/>
</dbReference>
<proteinExistence type="predicted"/>
<evidence type="ECO:0000255" key="1">
    <source>
        <dbReference type="PROSITE-ProRule" id="PRU00435"/>
    </source>
</evidence>
<organism>
    <name type="scientific">Bacillus subtilis (strain 168)</name>
    <dbReference type="NCBI Taxonomy" id="224308"/>
    <lineage>
        <taxon>Bacteria</taxon>
        <taxon>Bacillati</taxon>
        <taxon>Bacillota</taxon>
        <taxon>Bacilli</taxon>
        <taxon>Bacillales</taxon>
        <taxon>Bacillaceae</taxon>
        <taxon>Bacillus</taxon>
    </lineage>
</organism>
<keyword id="KW-0238">DNA-binding</keyword>
<keyword id="KW-1185">Reference proteome</keyword>
<keyword id="KW-0804">Transcription</keyword>
<keyword id="KW-0805">Transcription regulation</keyword>
<feature type="chain" id="PRO_0000148885" description="Uncharacterized HTH-type transcriptional regulator YdzF">
    <location>
        <begin position="1"/>
        <end position="109"/>
    </location>
</feature>
<feature type="domain" description="HTH hxlR-type" evidence="1">
    <location>
        <begin position="10"/>
        <end position="109"/>
    </location>
</feature>
<sequence>MNSLCRSKQAPFEYTLSLIGGKWKMRILYELGCEKTMRYGELKRAMPFITHKMLSAQLKELQTDGLIHRSEVSHTPLKVEYSLSDRGRSLYPLIDEMCKWGMAQGGPHM</sequence>